<name>KTHY_ROSS1</name>
<proteinExistence type="inferred from homology"/>
<protein>
    <recommendedName>
        <fullName evidence="1">Thymidylate kinase</fullName>
        <ecNumber evidence="1">2.7.4.9</ecNumber>
    </recommendedName>
    <alternativeName>
        <fullName evidence="1">dTMP kinase</fullName>
    </alternativeName>
</protein>
<gene>
    <name evidence="1" type="primary">tmk</name>
    <name type="ordered locus">RoseRS_3232</name>
</gene>
<sequence>MSLFVTFEGPEGSGKSTQARLLYESLHARRFPVILTREPGGTRIGDLIRRIVLDLQHTEMAPTAEMLLFSAARAQLVSEVIRPYLEQGGIVLCDRYADSTFAYQGYGLGRDLAELRVITAAATGGLRPDITFYLDISAAEGLERKRRKGARSTGQRGANNDEWNRLDARELEYHQRVEAGYRELIAADPERWRVLDARQSIEALAEQIGAIVEPYLASITRLETVL</sequence>
<organism>
    <name type="scientific">Roseiflexus sp. (strain RS-1)</name>
    <dbReference type="NCBI Taxonomy" id="357808"/>
    <lineage>
        <taxon>Bacteria</taxon>
        <taxon>Bacillati</taxon>
        <taxon>Chloroflexota</taxon>
        <taxon>Chloroflexia</taxon>
        <taxon>Chloroflexales</taxon>
        <taxon>Roseiflexineae</taxon>
        <taxon>Roseiflexaceae</taxon>
        <taxon>Roseiflexus</taxon>
    </lineage>
</organism>
<feature type="chain" id="PRO_1000023272" description="Thymidylate kinase">
    <location>
        <begin position="1"/>
        <end position="226"/>
    </location>
</feature>
<feature type="binding site" evidence="1">
    <location>
        <begin position="9"/>
        <end position="16"/>
    </location>
    <ligand>
        <name>ATP</name>
        <dbReference type="ChEBI" id="CHEBI:30616"/>
    </ligand>
</feature>
<accession>A5UY90</accession>
<dbReference type="EC" id="2.7.4.9" evidence="1"/>
<dbReference type="EMBL" id="CP000686">
    <property type="protein sequence ID" value="ABQ91593.1"/>
    <property type="molecule type" value="Genomic_DNA"/>
</dbReference>
<dbReference type="RefSeq" id="WP_011957937.1">
    <property type="nucleotide sequence ID" value="NC_009523.1"/>
</dbReference>
<dbReference type="SMR" id="A5UY90"/>
<dbReference type="STRING" id="357808.RoseRS_3232"/>
<dbReference type="KEGG" id="rrs:RoseRS_3232"/>
<dbReference type="eggNOG" id="COG0125">
    <property type="taxonomic scope" value="Bacteria"/>
</dbReference>
<dbReference type="HOGENOM" id="CLU_049131_0_2_0"/>
<dbReference type="OrthoDB" id="9774907at2"/>
<dbReference type="Proteomes" id="UP000006554">
    <property type="component" value="Chromosome"/>
</dbReference>
<dbReference type="GO" id="GO:0005829">
    <property type="term" value="C:cytosol"/>
    <property type="evidence" value="ECO:0007669"/>
    <property type="project" value="TreeGrafter"/>
</dbReference>
<dbReference type="GO" id="GO:0005524">
    <property type="term" value="F:ATP binding"/>
    <property type="evidence" value="ECO:0007669"/>
    <property type="project" value="UniProtKB-UniRule"/>
</dbReference>
<dbReference type="GO" id="GO:0004798">
    <property type="term" value="F:dTMP kinase activity"/>
    <property type="evidence" value="ECO:0007669"/>
    <property type="project" value="UniProtKB-UniRule"/>
</dbReference>
<dbReference type="GO" id="GO:0006233">
    <property type="term" value="P:dTDP biosynthetic process"/>
    <property type="evidence" value="ECO:0007669"/>
    <property type="project" value="InterPro"/>
</dbReference>
<dbReference type="GO" id="GO:0006235">
    <property type="term" value="P:dTTP biosynthetic process"/>
    <property type="evidence" value="ECO:0007669"/>
    <property type="project" value="UniProtKB-UniRule"/>
</dbReference>
<dbReference type="GO" id="GO:0006227">
    <property type="term" value="P:dUDP biosynthetic process"/>
    <property type="evidence" value="ECO:0007669"/>
    <property type="project" value="TreeGrafter"/>
</dbReference>
<dbReference type="CDD" id="cd01672">
    <property type="entry name" value="TMPK"/>
    <property type="match status" value="1"/>
</dbReference>
<dbReference type="FunFam" id="3.40.50.300:FF:000225">
    <property type="entry name" value="Thymidylate kinase"/>
    <property type="match status" value="1"/>
</dbReference>
<dbReference type="Gene3D" id="3.40.50.300">
    <property type="entry name" value="P-loop containing nucleotide triphosphate hydrolases"/>
    <property type="match status" value="1"/>
</dbReference>
<dbReference type="HAMAP" id="MF_00165">
    <property type="entry name" value="Thymidylate_kinase"/>
    <property type="match status" value="1"/>
</dbReference>
<dbReference type="InterPro" id="IPR027417">
    <property type="entry name" value="P-loop_NTPase"/>
</dbReference>
<dbReference type="InterPro" id="IPR039430">
    <property type="entry name" value="Thymidylate_kin-like_dom"/>
</dbReference>
<dbReference type="InterPro" id="IPR018095">
    <property type="entry name" value="Thymidylate_kin_CS"/>
</dbReference>
<dbReference type="InterPro" id="IPR018094">
    <property type="entry name" value="Thymidylate_kinase"/>
</dbReference>
<dbReference type="NCBIfam" id="TIGR00041">
    <property type="entry name" value="DTMP_kinase"/>
    <property type="match status" value="1"/>
</dbReference>
<dbReference type="PANTHER" id="PTHR10344">
    <property type="entry name" value="THYMIDYLATE KINASE"/>
    <property type="match status" value="1"/>
</dbReference>
<dbReference type="PANTHER" id="PTHR10344:SF4">
    <property type="entry name" value="UMP-CMP KINASE 2, MITOCHONDRIAL"/>
    <property type="match status" value="1"/>
</dbReference>
<dbReference type="Pfam" id="PF02223">
    <property type="entry name" value="Thymidylate_kin"/>
    <property type="match status" value="1"/>
</dbReference>
<dbReference type="SUPFAM" id="SSF52540">
    <property type="entry name" value="P-loop containing nucleoside triphosphate hydrolases"/>
    <property type="match status" value="1"/>
</dbReference>
<dbReference type="PROSITE" id="PS01331">
    <property type="entry name" value="THYMIDYLATE_KINASE"/>
    <property type="match status" value="1"/>
</dbReference>
<keyword id="KW-0067">ATP-binding</keyword>
<keyword id="KW-0418">Kinase</keyword>
<keyword id="KW-0545">Nucleotide biosynthesis</keyword>
<keyword id="KW-0547">Nucleotide-binding</keyword>
<keyword id="KW-0808">Transferase</keyword>
<comment type="function">
    <text evidence="1">Phosphorylation of dTMP to form dTDP in both de novo and salvage pathways of dTTP synthesis.</text>
</comment>
<comment type="catalytic activity">
    <reaction evidence="1">
        <text>dTMP + ATP = dTDP + ADP</text>
        <dbReference type="Rhea" id="RHEA:13517"/>
        <dbReference type="ChEBI" id="CHEBI:30616"/>
        <dbReference type="ChEBI" id="CHEBI:58369"/>
        <dbReference type="ChEBI" id="CHEBI:63528"/>
        <dbReference type="ChEBI" id="CHEBI:456216"/>
        <dbReference type="EC" id="2.7.4.9"/>
    </reaction>
</comment>
<comment type="similarity">
    <text evidence="1">Belongs to the thymidylate kinase family.</text>
</comment>
<reference key="1">
    <citation type="submission" date="2007-04" db="EMBL/GenBank/DDBJ databases">
        <title>Complete sequence of Roseiflexus sp. RS-1.</title>
        <authorList>
            <consortium name="US DOE Joint Genome Institute"/>
            <person name="Copeland A."/>
            <person name="Lucas S."/>
            <person name="Lapidus A."/>
            <person name="Barry K."/>
            <person name="Detter J.C."/>
            <person name="Glavina del Rio T."/>
            <person name="Hammon N."/>
            <person name="Israni S."/>
            <person name="Dalin E."/>
            <person name="Tice H."/>
            <person name="Pitluck S."/>
            <person name="Chertkov O."/>
            <person name="Brettin T."/>
            <person name="Bruce D."/>
            <person name="Han C."/>
            <person name="Schmutz J."/>
            <person name="Larimer F."/>
            <person name="Land M."/>
            <person name="Hauser L."/>
            <person name="Kyrpides N."/>
            <person name="Mikhailova N."/>
            <person name="Bryant D.A."/>
            <person name="Richardson P."/>
        </authorList>
    </citation>
    <scope>NUCLEOTIDE SEQUENCE [LARGE SCALE GENOMIC DNA]</scope>
    <source>
        <strain>RS-1</strain>
    </source>
</reference>
<evidence type="ECO:0000255" key="1">
    <source>
        <dbReference type="HAMAP-Rule" id="MF_00165"/>
    </source>
</evidence>